<proteinExistence type="inferred from homology"/>
<protein>
    <recommendedName>
        <fullName>Nitrogenase-stabilizing/protective protein NifW</fullName>
    </recommendedName>
</protein>
<sequence length="127" mass="14355">MRSCFAESRAIDVTDILARLKSLSAAEEFFAVLGISYDPRVLNVSRLHILKRMGQYLAEEDFAGLPDGVIAARARATLERAYEDFATSSPLTHRVFKVLKEHDPDKPATRDHTFVPFESILRRFGTE</sequence>
<dbReference type="EMBL" id="BA000012">
    <property type="protein sequence ID" value="BAB52239.1"/>
    <property type="molecule type" value="Genomic_DNA"/>
</dbReference>
<dbReference type="RefSeq" id="WP_010913572.1">
    <property type="nucleotide sequence ID" value="NC_002678.2"/>
</dbReference>
<dbReference type="KEGG" id="mlo:mll5864"/>
<dbReference type="PATRIC" id="fig|266835.9.peg.4662"/>
<dbReference type="eggNOG" id="ENOG50330W8">
    <property type="taxonomic scope" value="Bacteria"/>
</dbReference>
<dbReference type="HOGENOM" id="CLU_145318_0_0_5"/>
<dbReference type="Proteomes" id="UP000000552">
    <property type="component" value="Chromosome"/>
</dbReference>
<dbReference type="GO" id="GO:0009399">
    <property type="term" value="P:nitrogen fixation"/>
    <property type="evidence" value="ECO:0007669"/>
    <property type="project" value="UniProtKB-UniRule"/>
</dbReference>
<dbReference type="HAMAP" id="MF_00529">
    <property type="entry name" value="NifW"/>
    <property type="match status" value="1"/>
</dbReference>
<dbReference type="InterPro" id="IPR004893">
    <property type="entry name" value="NifW"/>
</dbReference>
<dbReference type="NCBIfam" id="NF002009">
    <property type="entry name" value="PRK00810.1"/>
    <property type="match status" value="1"/>
</dbReference>
<dbReference type="Pfam" id="PF03206">
    <property type="entry name" value="NifW"/>
    <property type="match status" value="1"/>
</dbReference>
<dbReference type="PIRSF" id="PIRSF005790">
    <property type="entry name" value="NifW"/>
    <property type="match status" value="1"/>
</dbReference>
<organism>
    <name type="scientific">Mesorhizobium japonicum (strain LMG 29417 / CECT 9101 / MAFF 303099)</name>
    <name type="common">Mesorhizobium loti (strain MAFF 303099)</name>
    <dbReference type="NCBI Taxonomy" id="266835"/>
    <lineage>
        <taxon>Bacteria</taxon>
        <taxon>Pseudomonadati</taxon>
        <taxon>Pseudomonadota</taxon>
        <taxon>Alphaproteobacteria</taxon>
        <taxon>Hyphomicrobiales</taxon>
        <taxon>Phyllobacteriaceae</taxon>
        <taxon>Mesorhizobium</taxon>
    </lineage>
</organism>
<comment type="function">
    <text evidence="1">May protect the nitrogenase Fe-Mo protein from oxidative damage.</text>
</comment>
<comment type="subunit">
    <text evidence="1">Homotrimer; associates with NifD.</text>
</comment>
<comment type="similarity">
    <text evidence="2">Belongs to the NifW family.</text>
</comment>
<accession>Q98AT3</accession>
<reference key="1">
    <citation type="journal article" date="2000" name="DNA Res.">
        <title>Complete genome structure of the nitrogen-fixing symbiotic bacterium Mesorhizobium loti.</title>
        <authorList>
            <person name="Kaneko T."/>
            <person name="Nakamura Y."/>
            <person name="Sato S."/>
            <person name="Asamizu E."/>
            <person name="Kato T."/>
            <person name="Sasamoto S."/>
            <person name="Watanabe A."/>
            <person name="Idesawa K."/>
            <person name="Ishikawa A."/>
            <person name="Kawashima K."/>
            <person name="Kimura T."/>
            <person name="Kishida Y."/>
            <person name="Kiyokawa C."/>
            <person name="Kohara M."/>
            <person name="Matsumoto M."/>
            <person name="Matsuno A."/>
            <person name="Mochizuki Y."/>
            <person name="Nakayama S."/>
            <person name="Nakazaki N."/>
            <person name="Shimpo S."/>
            <person name="Sugimoto M."/>
            <person name="Takeuchi C."/>
            <person name="Yamada M."/>
            <person name="Tabata S."/>
        </authorList>
    </citation>
    <scope>NUCLEOTIDE SEQUENCE [LARGE SCALE GENOMIC DNA]</scope>
    <source>
        <strain>LMG 29417 / CECT 9101 / MAFF 303099</strain>
    </source>
</reference>
<name>NIFW_RHILO</name>
<gene>
    <name type="primary">nifW</name>
    <name type="ordered locus">mll5864</name>
</gene>
<keyword id="KW-0535">Nitrogen fixation</keyword>
<feature type="chain" id="PRO_0000219537" description="Nitrogenase-stabilizing/protective protein NifW">
    <location>
        <begin position="1"/>
        <end position="127"/>
    </location>
</feature>
<evidence type="ECO:0000250" key="1"/>
<evidence type="ECO:0000305" key="2"/>